<accession>Q5I0H3</accession>
<proteinExistence type="evidence at protein level"/>
<organism>
    <name type="scientific">Rattus norvegicus</name>
    <name type="common">Rat</name>
    <dbReference type="NCBI Taxonomy" id="10116"/>
    <lineage>
        <taxon>Eukaryota</taxon>
        <taxon>Metazoa</taxon>
        <taxon>Chordata</taxon>
        <taxon>Craniata</taxon>
        <taxon>Vertebrata</taxon>
        <taxon>Euteleostomi</taxon>
        <taxon>Mammalia</taxon>
        <taxon>Eutheria</taxon>
        <taxon>Euarchontoglires</taxon>
        <taxon>Glires</taxon>
        <taxon>Rodentia</taxon>
        <taxon>Myomorpha</taxon>
        <taxon>Muroidea</taxon>
        <taxon>Muridae</taxon>
        <taxon>Murinae</taxon>
        <taxon>Rattus</taxon>
    </lineage>
</organism>
<gene>
    <name type="primary">Sumo1</name>
</gene>
<protein>
    <recommendedName>
        <fullName>Small ubiquitin-related modifier 1</fullName>
        <shortName>SUMO-1</shortName>
    </recommendedName>
</protein>
<sequence length="101" mass="11557">MSDQEAKPSTEDLGDKKEGEYIKLKVIGQDSSEIHFKVKMTTHLKKLKESYCQRQGVPMNSLRFLFEGQRIADNHTPKELGMEEEDVIEVYQEQTGGHSTV</sequence>
<evidence type="ECO:0000250" key="1"/>
<evidence type="ECO:0000250" key="2">
    <source>
        <dbReference type="UniProtKB" id="P63165"/>
    </source>
</evidence>
<evidence type="ECO:0000250" key="3">
    <source>
        <dbReference type="UniProtKB" id="P63166"/>
    </source>
</evidence>
<evidence type="ECO:0000255" key="4">
    <source>
        <dbReference type="PROSITE-ProRule" id="PRU00214"/>
    </source>
</evidence>
<evidence type="ECO:0000269" key="5">
    <source>
    </source>
</evidence>
<evidence type="ECO:0000305" key="6"/>
<evidence type="ECO:0007744" key="7">
    <source>
    </source>
</evidence>
<reference key="1">
    <citation type="journal article" date="2004" name="Genome Res.">
        <title>The status, quality, and expansion of the NIH full-length cDNA project: the Mammalian Gene Collection (MGC).</title>
        <authorList>
            <consortium name="The MGC Project Team"/>
        </authorList>
    </citation>
    <scope>NUCLEOTIDE SEQUENCE [LARGE SCALE MRNA]</scope>
    <source>
        <tissue>Liver</tissue>
    </source>
</reference>
<reference key="2">
    <citation type="journal article" date="2006" name="J. Neurosci. Res.">
        <title>Functional modulation of parkin through physical interaction with SUMO-1.</title>
        <authorList>
            <person name="Um J.W."/>
            <person name="Chung K.C."/>
        </authorList>
    </citation>
    <scope>INTERACTION WITH PRKN</scope>
</reference>
<reference key="3">
    <citation type="journal article" date="2012" name="Nat. Commun.">
        <title>Quantitative maps of protein phosphorylation sites across 14 different rat organs and tissues.</title>
        <authorList>
            <person name="Lundby A."/>
            <person name="Secher A."/>
            <person name="Lage K."/>
            <person name="Nordsborg N.B."/>
            <person name="Dmytriyev A."/>
            <person name="Lundby C."/>
            <person name="Olsen J.V."/>
        </authorList>
    </citation>
    <scope>PHOSPHORYLATION [LARGE SCALE ANALYSIS] AT SER-2</scope>
    <scope>IDENTIFICATION BY MASS SPECTROMETRY [LARGE SCALE ANALYSIS]</scope>
</reference>
<keyword id="KW-0007">Acetylation</keyword>
<keyword id="KW-1003">Cell membrane</keyword>
<keyword id="KW-0963">Cytoplasm</keyword>
<keyword id="KW-1017">Isopeptide bond</keyword>
<keyword id="KW-0472">Membrane</keyword>
<keyword id="KW-0539">Nucleus</keyword>
<keyword id="KW-0597">Phosphoprotein</keyword>
<keyword id="KW-1185">Reference proteome</keyword>
<keyword id="KW-0832">Ubl conjugation</keyword>
<keyword id="KW-0833">Ubl conjugation pathway</keyword>
<dbReference type="EMBL" id="BC088322">
    <property type="protein sequence ID" value="AAH88322.1"/>
    <property type="molecule type" value="mRNA"/>
</dbReference>
<dbReference type="RefSeq" id="NP_001009672.1">
    <property type="nucleotide sequence ID" value="NM_001009672.1"/>
</dbReference>
<dbReference type="SMR" id="Q5I0H3"/>
<dbReference type="BioGRID" id="256960">
    <property type="interactions" value="13"/>
</dbReference>
<dbReference type="DIP" id="DIP-46501N"/>
<dbReference type="FunCoup" id="Q5I0H3">
    <property type="interactions" value="2740"/>
</dbReference>
<dbReference type="IntAct" id="Q5I0H3">
    <property type="interactions" value="7"/>
</dbReference>
<dbReference type="MINT" id="Q5I0H3"/>
<dbReference type="STRING" id="10116.ENSRNOP00000022048"/>
<dbReference type="iPTMnet" id="Q5I0H3"/>
<dbReference type="PhosphoSitePlus" id="Q5I0H3"/>
<dbReference type="jPOST" id="Q5I0H3"/>
<dbReference type="PaxDb" id="10116-ENSRNOP00000022048"/>
<dbReference type="GeneID" id="301442"/>
<dbReference type="KEGG" id="rno:301442"/>
<dbReference type="UCSC" id="RGD:1306919">
    <property type="organism name" value="rat"/>
</dbReference>
<dbReference type="AGR" id="RGD:1306919"/>
<dbReference type="CTD" id="7341"/>
<dbReference type="RGD" id="1306919">
    <property type="gene designation" value="Sumo1"/>
</dbReference>
<dbReference type="VEuPathDB" id="HostDB:ENSRNOG00000016133"/>
<dbReference type="eggNOG" id="KOG1769">
    <property type="taxonomic scope" value="Eukaryota"/>
</dbReference>
<dbReference type="HOGENOM" id="CLU_148322_0_0_1"/>
<dbReference type="InParanoid" id="Q5I0H3"/>
<dbReference type="OrthoDB" id="66762at9989"/>
<dbReference type="PhylomeDB" id="Q5I0H3"/>
<dbReference type="TreeFam" id="TF315116"/>
<dbReference type="Reactome" id="R-RNO-3065676">
    <property type="pathway name" value="SUMO is conjugated to E1 (UBA2:SAE1)"/>
</dbReference>
<dbReference type="Reactome" id="R-RNO-3065678">
    <property type="pathway name" value="SUMO is transferred from E1 to E2 (UBE2I, UBC9)"/>
</dbReference>
<dbReference type="Reactome" id="R-RNO-3065679">
    <property type="pathway name" value="SUMO is proteolytically processed"/>
</dbReference>
<dbReference type="Reactome" id="R-RNO-3108214">
    <property type="pathway name" value="SUMOylation of DNA damage response and repair proteins"/>
</dbReference>
<dbReference type="Reactome" id="R-RNO-3232118">
    <property type="pathway name" value="SUMOylation of transcription factors"/>
</dbReference>
<dbReference type="Reactome" id="R-RNO-3232142">
    <property type="pathway name" value="SUMOylation of ubiquitinylation proteins"/>
</dbReference>
<dbReference type="Reactome" id="R-RNO-3899300">
    <property type="pathway name" value="SUMOylation of transcription cofactors"/>
</dbReference>
<dbReference type="Reactome" id="R-RNO-4085377">
    <property type="pathway name" value="SUMOylation of SUMOylation proteins"/>
</dbReference>
<dbReference type="Reactome" id="R-RNO-4090294">
    <property type="pathway name" value="SUMOylation of intracellular receptors"/>
</dbReference>
<dbReference type="Reactome" id="R-RNO-4551638">
    <property type="pathway name" value="SUMOylation of chromatin organization proteins"/>
</dbReference>
<dbReference type="Reactome" id="R-RNO-4570464">
    <property type="pathway name" value="SUMOylation of RNA binding proteins"/>
</dbReference>
<dbReference type="Reactome" id="R-RNO-4615885">
    <property type="pathway name" value="SUMOylation of DNA replication proteins"/>
</dbReference>
<dbReference type="Reactome" id="R-RNO-4655427">
    <property type="pathway name" value="SUMOylation of DNA methylation proteins"/>
</dbReference>
<dbReference type="Reactome" id="R-RNO-4755510">
    <property type="pathway name" value="SUMOylation of immune response proteins"/>
</dbReference>
<dbReference type="Reactome" id="R-RNO-5693565">
    <property type="pathway name" value="Recruitment and ATM-mediated phosphorylation of repair and signaling proteins at DNA double strand breaks"/>
</dbReference>
<dbReference type="Reactome" id="R-RNO-5696395">
    <property type="pathway name" value="Formation of Incision Complex in GG-NER"/>
</dbReference>
<dbReference type="Reactome" id="R-RNO-877312">
    <property type="pathway name" value="Regulation of IFNG signaling"/>
</dbReference>
<dbReference type="Reactome" id="R-RNO-8866904">
    <property type="pathway name" value="Negative regulation of activity of TFAP2 (AP-2) family transcription factors"/>
</dbReference>
<dbReference type="Reactome" id="R-RNO-9615933">
    <property type="pathway name" value="Postmitotic nuclear pore complex (NPC) reformation"/>
</dbReference>
<dbReference type="Reactome" id="R-RNO-9793242">
    <property type="pathway name" value="SUMOylation of nuclear envelope proteins"/>
</dbReference>
<dbReference type="Reactome" id="R-RNO-9856649">
    <property type="pathway name" value="Transcriptional and post-translational regulation of MITF-M expression and activity"/>
</dbReference>
<dbReference type="PRO" id="PR:Q5I0H3"/>
<dbReference type="Proteomes" id="UP000002494">
    <property type="component" value="Chromosome 9"/>
</dbReference>
<dbReference type="Bgee" id="ENSRNOG00000016133">
    <property type="expression patterns" value="Expressed in thymus and 20 other cell types or tissues"/>
</dbReference>
<dbReference type="GO" id="GO:0030425">
    <property type="term" value="C:dendrite"/>
    <property type="evidence" value="ECO:0000314"/>
    <property type="project" value="RGD"/>
</dbReference>
<dbReference type="GO" id="GO:0001650">
    <property type="term" value="C:fibrillar center"/>
    <property type="evidence" value="ECO:0000314"/>
    <property type="project" value="RGD"/>
</dbReference>
<dbReference type="GO" id="GO:0098978">
    <property type="term" value="C:glutamatergic synapse"/>
    <property type="evidence" value="ECO:0000266"/>
    <property type="project" value="RGD"/>
</dbReference>
<dbReference type="GO" id="GO:0000792">
    <property type="term" value="C:heterochromatin"/>
    <property type="evidence" value="ECO:0000314"/>
    <property type="project" value="RGD"/>
</dbReference>
<dbReference type="GO" id="GO:0016604">
    <property type="term" value="C:nuclear body"/>
    <property type="evidence" value="ECO:0000266"/>
    <property type="project" value="RGD"/>
</dbReference>
<dbReference type="GO" id="GO:0031965">
    <property type="term" value="C:nuclear membrane"/>
    <property type="evidence" value="ECO:0007669"/>
    <property type="project" value="UniProtKB-SubCell"/>
</dbReference>
<dbReference type="GO" id="GO:0016607">
    <property type="term" value="C:nuclear speck"/>
    <property type="evidence" value="ECO:0007669"/>
    <property type="project" value="UniProtKB-SubCell"/>
</dbReference>
<dbReference type="GO" id="GO:0097165">
    <property type="term" value="C:nuclear stress granule"/>
    <property type="evidence" value="ECO:0000250"/>
    <property type="project" value="UniProtKB"/>
</dbReference>
<dbReference type="GO" id="GO:0005634">
    <property type="term" value="C:nucleus"/>
    <property type="evidence" value="ECO:0000266"/>
    <property type="project" value="RGD"/>
</dbReference>
<dbReference type="GO" id="GO:0005886">
    <property type="term" value="C:plasma membrane"/>
    <property type="evidence" value="ECO:0000250"/>
    <property type="project" value="UniProtKB"/>
</dbReference>
<dbReference type="GO" id="GO:0016605">
    <property type="term" value="C:PML body"/>
    <property type="evidence" value="ECO:0000314"/>
    <property type="project" value="RGD"/>
</dbReference>
<dbReference type="GO" id="GO:0099524">
    <property type="term" value="C:postsynaptic cytosol"/>
    <property type="evidence" value="ECO:0000266"/>
    <property type="project" value="RGD"/>
</dbReference>
<dbReference type="GO" id="GO:0099523">
    <property type="term" value="C:presynaptic cytosol"/>
    <property type="evidence" value="ECO:0000266"/>
    <property type="project" value="RGD"/>
</dbReference>
<dbReference type="GO" id="GO:0008076">
    <property type="term" value="C:voltage-gated potassium channel complex"/>
    <property type="evidence" value="ECO:0000266"/>
    <property type="project" value="RGD"/>
</dbReference>
<dbReference type="GO" id="GO:0001741">
    <property type="term" value="C:XY body"/>
    <property type="evidence" value="ECO:0000314"/>
    <property type="project" value="RGD"/>
</dbReference>
<dbReference type="GO" id="GO:0019899">
    <property type="term" value="F:enzyme binding"/>
    <property type="evidence" value="ECO:0000266"/>
    <property type="project" value="RGD"/>
</dbReference>
<dbReference type="GO" id="GO:0015459">
    <property type="term" value="F:potassium channel regulator activity"/>
    <property type="evidence" value="ECO:0000250"/>
    <property type="project" value="UniProtKB"/>
</dbReference>
<dbReference type="GO" id="GO:0031386">
    <property type="term" value="F:protein tag activity"/>
    <property type="evidence" value="ECO:0000266"/>
    <property type="project" value="RGD"/>
</dbReference>
<dbReference type="GO" id="GO:0044388">
    <property type="term" value="F:small protein activating enzyme binding"/>
    <property type="evidence" value="ECO:0000266"/>
    <property type="project" value="RGD"/>
</dbReference>
<dbReference type="GO" id="GO:0008134">
    <property type="term" value="F:transcription factor binding"/>
    <property type="evidence" value="ECO:0000250"/>
    <property type="project" value="AgBase"/>
</dbReference>
<dbReference type="GO" id="GO:0031625">
    <property type="term" value="F:ubiquitin protein ligase binding"/>
    <property type="evidence" value="ECO:0000250"/>
    <property type="project" value="UniProtKB"/>
</dbReference>
<dbReference type="GO" id="GO:0044389">
    <property type="term" value="F:ubiquitin-like protein ligase binding"/>
    <property type="evidence" value="ECO:0000318"/>
    <property type="project" value="GO_Central"/>
</dbReference>
<dbReference type="GO" id="GO:1990381">
    <property type="term" value="F:ubiquitin-specific protease binding"/>
    <property type="evidence" value="ECO:0000266"/>
    <property type="project" value="RGD"/>
</dbReference>
<dbReference type="GO" id="GO:0071276">
    <property type="term" value="P:cellular response to cadmium ion"/>
    <property type="evidence" value="ECO:0000250"/>
    <property type="project" value="UniProtKB"/>
</dbReference>
<dbReference type="GO" id="GO:0034605">
    <property type="term" value="P:cellular response to heat"/>
    <property type="evidence" value="ECO:0000250"/>
    <property type="project" value="UniProtKB"/>
</dbReference>
<dbReference type="GO" id="GO:0071456">
    <property type="term" value="P:cellular response to hypoxia"/>
    <property type="evidence" value="ECO:0000270"/>
    <property type="project" value="RGD"/>
</dbReference>
<dbReference type="GO" id="GO:0045759">
    <property type="term" value="P:negative regulation of action potential"/>
    <property type="evidence" value="ECO:0000250"/>
    <property type="project" value="UniProtKB"/>
</dbReference>
<dbReference type="GO" id="GO:1902260">
    <property type="term" value="P:negative regulation of delayed rectifier potassium channel activity"/>
    <property type="evidence" value="ECO:0000250"/>
    <property type="project" value="UniProtKB"/>
</dbReference>
<dbReference type="GO" id="GO:0045892">
    <property type="term" value="P:negative regulation of DNA-templated transcription"/>
    <property type="evidence" value="ECO:0000266"/>
    <property type="project" value="RGD"/>
</dbReference>
<dbReference type="GO" id="GO:0042308">
    <property type="term" value="P:negative regulation of protein import into nucleus"/>
    <property type="evidence" value="ECO:0000266"/>
    <property type="project" value="RGD"/>
</dbReference>
<dbReference type="GO" id="GO:0010621">
    <property type="term" value="P:negative regulation of transcription by transcription factor localization"/>
    <property type="evidence" value="ECO:0000266"/>
    <property type="project" value="RGD"/>
</dbReference>
<dbReference type="GO" id="GO:0030578">
    <property type="term" value="P:PML body organization"/>
    <property type="evidence" value="ECO:0000266"/>
    <property type="project" value="RGD"/>
</dbReference>
<dbReference type="GO" id="GO:0032436">
    <property type="term" value="P:positive regulation of proteasomal ubiquitin-dependent protein catabolic process"/>
    <property type="evidence" value="ECO:0000266"/>
    <property type="project" value="RGD"/>
</dbReference>
<dbReference type="GO" id="GO:0031334">
    <property type="term" value="P:positive regulation of protein-containing complex assembly"/>
    <property type="evidence" value="ECO:0000266"/>
    <property type="project" value="RGD"/>
</dbReference>
<dbReference type="GO" id="GO:0090204">
    <property type="term" value="P:protein localization to nuclear pore"/>
    <property type="evidence" value="ECO:0000266"/>
    <property type="project" value="RGD"/>
</dbReference>
<dbReference type="GO" id="GO:0050821">
    <property type="term" value="P:protein stabilization"/>
    <property type="evidence" value="ECO:0000266"/>
    <property type="project" value="RGD"/>
</dbReference>
<dbReference type="GO" id="GO:0016925">
    <property type="term" value="P:protein sumoylation"/>
    <property type="evidence" value="ECO:0000250"/>
    <property type="project" value="UniProtKB"/>
</dbReference>
<dbReference type="GO" id="GO:1903169">
    <property type="term" value="P:regulation of calcium ion transmembrane transport"/>
    <property type="evidence" value="ECO:0000266"/>
    <property type="project" value="RGD"/>
</dbReference>
<dbReference type="GO" id="GO:0086004">
    <property type="term" value="P:regulation of cardiac muscle cell contraction"/>
    <property type="evidence" value="ECO:0000266"/>
    <property type="project" value="RGD"/>
</dbReference>
<dbReference type="GO" id="GO:0006355">
    <property type="term" value="P:regulation of DNA-templated transcription"/>
    <property type="evidence" value="ECO:0000266"/>
    <property type="project" value="RGD"/>
</dbReference>
<dbReference type="GO" id="GO:0031647">
    <property type="term" value="P:regulation of protein stability"/>
    <property type="evidence" value="ECO:0000266"/>
    <property type="project" value="RGD"/>
</dbReference>
<dbReference type="GO" id="GO:0060021">
    <property type="term" value="P:roof of mouth development"/>
    <property type="evidence" value="ECO:0000250"/>
    <property type="project" value="UniProtKB"/>
</dbReference>
<dbReference type="CDD" id="cd16114">
    <property type="entry name" value="Ubl_SUMO1"/>
    <property type="match status" value="1"/>
</dbReference>
<dbReference type="FunFam" id="3.10.20.90:FF:000092">
    <property type="entry name" value="Small ubiquitin-related modifier"/>
    <property type="match status" value="1"/>
</dbReference>
<dbReference type="Gene3D" id="3.10.20.90">
    <property type="entry name" value="Phosphatidylinositol 3-kinase Catalytic Subunit, Chain A, domain 1"/>
    <property type="match status" value="1"/>
</dbReference>
<dbReference type="InterPro" id="IPR022617">
    <property type="entry name" value="Rad60/SUMO-like_dom"/>
</dbReference>
<dbReference type="InterPro" id="IPR046332">
    <property type="entry name" value="SUMO1_Ubl"/>
</dbReference>
<dbReference type="InterPro" id="IPR000626">
    <property type="entry name" value="Ubiquitin-like_dom"/>
</dbReference>
<dbReference type="InterPro" id="IPR029071">
    <property type="entry name" value="Ubiquitin-like_domsf"/>
</dbReference>
<dbReference type="PANTHER" id="PTHR10562">
    <property type="entry name" value="SMALL UBIQUITIN-RELATED MODIFIER"/>
    <property type="match status" value="1"/>
</dbReference>
<dbReference type="Pfam" id="PF11976">
    <property type="entry name" value="Rad60-SLD"/>
    <property type="match status" value="1"/>
</dbReference>
<dbReference type="SMART" id="SM00213">
    <property type="entry name" value="UBQ"/>
    <property type="match status" value="1"/>
</dbReference>
<dbReference type="SUPFAM" id="SSF54236">
    <property type="entry name" value="Ubiquitin-like"/>
    <property type="match status" value="1"/>
</dbReference>
<dbReference type="PROSITE" id="PS50053">
    <property type="entry name" value="UBIQUITIN_2"/>
    <property type="match status" value="1"/>
</dbReference>
<feature type="initiator methionine" description="Removed" evidence="2">
    <location>
        <position position="1"/>
    </location>
</feature>
<feature type="chain" id="PRO_0000267610" description="Small ubiquitin-related modifier 1">
    <location>
        <begin position="2"/>
        <end position="97"/>
    </location>
</feature>
<feature type="propeptide" id="PRO_0000267611" evidence="1">
    <location>
        <begin position="98"/>
        <end position="101"/>
    </location>
</feature>
<feature type="domain" description="Ubiquitin-like" evidence="4">
    <location>
        <begin position="20"/>
        <end position="97"/>
    </location>
</feature>
<feature type="site" description="Interaction with PIAS2" evidence="1">
    <location>
        <position position="36"/>
    </location>
</feature>
<feature type="modified residue" description="N-acetylserine" evidence="2">
    <location>
        <position position="2"/>
    </location>
</feature>
<feature type="modified residue" description="Phosphoserine" evidence="7">
    <location>
        <position position="2"/>
    </location>
</feature>
<feature type="modified residue" description="Phosphoserine" evidence="2">
    <location>
        <position position="9"/>
    </location>
</feature>
<feature type="modified residue" description="Phosphoserine" evidence="2">
    <location>
        <position position="32"/>
    </location>
</feature>
<feature type="cross-link" description="Glycyl lysine isopeptide (Lys-Gly) (interchain with G-Cter in SUMO1); alternate" evidence="2">
    <location>
        <position position="7"/>
    </location>
</feature>
<feature type="cross-link" description="Glycyl lysine isopeptide (Lys-Gly) (interchain with G-Cter in SUMO2); alternate" evidence="2">
    <location>
        <position position="7"/>
    </location>
</feature>
<feature type="cross-link" description="Glycyl lysine isopeptide (Lys-Gly) (interchain with G-Cter in SUMO2)" evidence="2">
    <location>
        <position position="16"/>
    </location>
</feature>
<feature type="cross-link" description="Glycyl lysine isopeptide (Lys-Gly) (interchain with G-Cter in SUMO2)" evidence="2">
    <location>
        <position position="17"/>
    </location>
</feature>
<feature type="cross-link" description="Glycyl lysine isopeptide (Lys-Gly) (interchain with G-Cter in SUMO2)" evidence="2">
    <location>
        <position position="23"/>
    </location>
</feature>
<feature type="cross-link" description="Glycyl lysine isopeptide (Lys-Gly) (interchain with G-Cter in SUMO1)" evidence="2">
    <location>
        <position position="25"/>
    </location>
</feature>
<feature type="cross-link" description="Glycyl lysine isopeptide (Lys-Gly) (interchain with G-Cter in SUMO2)" evidence="2">
    <location>
        <position position="37"/>
    </location>
</feature>
<feature type="cross-link" description="Glycyl lysine isopeptide (Lys-Gly) (interchain with G-Cter in SUMO2)" evidence="2">
    <location>
        <position position="39"/>
    </location>
</feature>
<feature type="cross-link" description="Glycyl lysine isopeptide (Lys-Gly) (interchain with G-Cter in SUMO2)" evidence="2">
    <location>
        <position position="45"/>
    </location>
</feature>
<feature type="cross-link" description="Glycyl lysine isopeptide (Lys-Gly) (interchain with G-Cter in SUMO2)" evidence="2">
    <location>
        <position position="46"/>
    </location>
</feature>
<feature type="cross-link" description="Glycyl lysine isopeptide (Gly-Lys) (interchain with K-? in acceptor proteins)" evidence="4">
    <location>
        <position position="97"/>
    </location>
</feature>
<name>SUMO1_RAT</name>
<comment type="function">
    <text evidence="2 3">Ubiquitin-like protein that can be covalently attached to proteins as a monomer or a lysine-linked polymer. Covalent attachment via an isopeptide bond to its substrates requires prior activation by the E1 complex SAE1-SAE2 and linkage to the E2 enzyme UBE2I, and can be promoted by E3 ligases such as PIAS1-4, RANBP2 or CBX4. This post-translational modification on lysine residues of proteins plays a crucial role in a number of cellular processes such as nuclear transport, DNA replication and repair, mitosis and signal transduction. Involved for instance in targeting RANGAP1 to the nuclear pore complex protein RANBP2. Covalently attached to the voltage-gated potassium channel KCNB1; this modulates the gating characteristics of KCNB1. Polymeric SUMO1 chains are also susceptible to polyubiquitination which functions as a signal for proteasomal degradation of modified proteins. May also regulate a network of genes involved in palate development. Covalently attached to ZFHX3.</text>
</comment>
<comment type="subunit">
    <text evidence="2 3 5">Covalently attached to KCNB1; UBE2I increases cross-linking with KCNB1 and PIAS1 decreases cross-links with KCNB1 (By similarity). Interacts with SAE2, RANBP2, PIAS1 and PIAS2 (By similarity). Interacts with PRKN (PubMed:16955485). Covalently attached to a number of proteins such as IKFZ1, PML, RANGAP1, HIPK2, SP100, p53, p73-alpha, MDM2, JUN, DNMT3B and TDG (By similarity). Also interacts with HIF1A, HIPK2, HIPK3, CHD3, EXOSC9, RAD51 and RAD52 (By similarity). Interacts with USP25 (via ts SIM domain); the interaction weakly sumoylates USP25 (By similarity). Interacts with SIMC1, CASP8AP2, RNF111 and SOBP (via SIM domains) (By similarity). Interacts with BHLHE40/DEC1 (By similarity). Interacts with RWDD3 (By similarity). Interacts with UBE2I/UBC9 and this interaction is enhanced in the presence of RWDD3 (By similarity). Interacts with MTA1 (By similarity). Interacts with SENP2 (By similarity). Interacts with HINT1 (By similarity).</text>
</comment>
<comment type="interaction">
    <interactant intactId="EBI-7253100">
        <id>Q5I0H3</id>
    </interactant>
    <interactant intactId="EBI-7809795">
        <id>P42260</id>
        <label>Grik2</label>
    </interactant>
    <organismsDiffer>false</organismsDiffer>
    <experiments>4</experiments>
</comment>
<comment type="interaction">
    <interactant intactId="EBI-7253100">
        <id>Q5I0H3</id>
    </interactant>
    <interactant intactId="EBI-15649175">
        <id>P38656</id>
        <label>Ssb</label>
    </interactant>
    <organismsDiffer>false</organismsDiffer>
    <experiments>3</experiments>
</comment>
<comment type="subcellular location">
    <subcellularLocation>
        <location evidence="2">Nucleus membrane</location>
    </subcellularLocation>
    <subcellularLocation>
        <location evidence="3">Nucleus speckle</location>
    </subcellularLocation>
    <subcellularLocation>
        <location evidence="2">Cytoplasm</location>
    </subcellularLocation>
    <subcellularLocation>
        <location evidence="2">Nucleus</location>
        <location evidence="2">PML body</location>
    </subcellularLocation>
    <subcellularLocation>
        <location evidence="2">Cell membrane</location>
    </subcellularLocation>
    <subcellularLocation>
        <location evidence="2">Nucleus</location>
    </subcellularLocation>
    <text evidence="2 3">Recruited by BCL11A into the nuclear body (By similarity). In the presence of ZFHX3, sequesterd to nuclear body (NB)-like dots in the nucleus some of which overlap or closely associate with PML body (By similarity).</text>
</comment>
<comment type="PTM">
    <text evidence="2">Cleavage of precursor form by SENP1 or SENP2 is necessary for function.</text>
</comment>
<comment type="PTM">
    <text evidence="2">Polymeric SUMO1 chains undergo polyubiquitination by RNF4.</text>
</comment>
<comment type="similarity">
    <text evidence="6">Belongs to the ubiquitin family. SUMO subfamily.</text>
</comment>